<feature type="chain" id="PRO_0000326498" description="Target of rapamycin complex subunit LST8">
    <location>
        <begin position="1"/>
        <end position="326"/>
    </location>
</feature>
<feature type="repeat" description="WD 1">
    <location>
        <begin position="1"/>
        <end position="37"/>
    </location>
</feature>
<feature type="repeat" description="WD 2">
    <location>
        <begin position="40"/>
        <end position="80"/>
    </location>
</feature>
<feature type="repeat" description="WD 3">
    <location>
        <begin position="83"/>
        <end position="122"/>
    </location>
</feature>
<feature type="repeat" description="WD 4">
    <location>
        <begin position="126"/>
        <end position="165"/>
    </location>
</feature>
<feature type="repeat" description="WD 5">
    <location>
        <begin position="168"/>
        <end position="207"/>
    </location>
</feature>
<feature type="repeat" description="WD 6">
    <location>
        <begin position="218"/>
        <end position="257"/>
    </location>
</feature>
<feature type="repeat" description="WD 7">
    <location>
        <begin position="268"/>
        <end position="309"/>
    </location>
</feature>
<feature type="modified residue" description="N-acetylmethionine" evidence="1">
    <location>
        <position position="1"/>
    </location>
</feature>
<feature type="modified residue" description="Phosphothreonine" evidence="1">
    <location>
        <position position="51"/>
    </location>
</feature>
<feature type="cross-link" description="Glycyl lysine isopeptide (Lys-Gly) (interchain with G-Cter in SUMO3)" evidence="1">
    <location>
        <position position="86"/>
    </location>
</feature>
<feature type="cross-link" description="Glycyl lysine isopeptide (Lys-Gly) (interchain with G-Cter in SUMO3)" evidence="1">
    <location>
        <position position="215"/>
    </location>
</feature>
<feature type="cross-link" description="Glycyl lysine isopeptide (Lys-Gly) (interchain with G-Cter in SUMO3)" evidence="1">
    <location>
        <position position="245"/>
    </location>
</feature>
<feature type="cross-link" description="Glycyl lysine isopeptide (Lys-Gly) (interchain with G-Cter in SUMO3)" evidence="1">
    <location>
        <position position="261"/>
    </location>
</feature>
<feature type="cross-link" description="Glycyl lysine isopeptide (Lys-Gly) (interchain with G-Cter in SUMO3); alternate" evidence="1">
    <location>
        <position position="305"/>
    </location>
</feature>
<feature type="cross-link" description="Glycyl lysine isopeptide (Lys-Gly) (interchain with G-Cter in ubiquitin); alternate" evidence="1">
    <location>
        <position position="305"/>
    </location>
</feature>
<feature type="cross-link" description="Glycyl lysine isopeptide (Lys-Gly) (interchain with G-Cter in SUMO1); alternate" evidence="1">
    <location>
        <position position="313"/>
    </location>
</feature>
<feature type="cross-link" description="Glycyl lysine isopeptide (Lys-Gly) (interchain with G-Cter in ubiquitin); alternate" evidence="1">
    <location>
        <position position="313"/>
    </location>
</feature>
<proteinExistence type="evidence at transcript level"/>
<comment type="function">
    <text evidence="1">Subunit of both mTORC1 and mTORC2, which regulates cell growth and survival in response to nutrient and hormonal signals. mTORC1 is activated in response to growth factors or amino acids. In response to nutrients, mTORC1 is recruited to the lysosome membrane and promotes protein, lipid and nucleotide synthesis by phosphorylating several substrates, such as ribosomal protein S6 kinase (RPS6KB1 and RPS6KB2) and EIF4EBP1 (4E-BP1). In the same time, it inhibits catabolic pathways by phosphorylating the autophagy initiation components ULK1 and ATG13, as well as transcription factor TFEB, a master regulators of lysosomal biogenesis and autophagy. The mTORC1 complex is inhibited in response to starvation and amino acid depletion. Within mTORC1, MLST8 interacts directly with MTOR and enhances its kinase activity. In nutrient-poor conditions, stabilizes the MTOR-RPTOR interaction and favors RPTOR-mediated inhibition of MTOR activity. As part of the mTORC2 complex, transduces signals from growth factors to pathways involved in proliferation, cytoskeletal organization, lipogenesis and anabolic output. mTORC2 is also activated by growth factors, but seems to be nutrient-insensitive. In response to growth factors, mTORC2 phosphorylates and activates AGC protein kinase family members, including AKT (AKT1, AKT2 and AKT3), PKC (PRKCA, PRKCB and PRKCE) and SGK1. mTORC2 functions upstream of Rho GTPases to regulate the actin cytoskeleton, probably by activating one or more Rho-type guanine nucleotide exchange factors. mTORC2 promotes the serum-induced formation of stress-fibers or F-actin. mTORC2 plays a critical role in AKT1 activation by mediating phosphorylation of different sites depending on the context, such as 'Thr-450', 'Ser-473', 'Ser-477' or 'Thr-479', facilitating the phosphorylation of the activation loop of AKT1 on 'Thr-308' by PDPK1/PDK1 which is a prerequisite for full activation. mTORC2 regulates the phosphorylation of SGK1 at 'Ser-422'. mTORC2 also modulates the phosphorylation of PRKCA on 'Ser-657'. Within mTORC2, MLST8 acts as a bridge between MAPKAP1/SIN1 and MTOR.</text>
</comment>
<comment type="subunit">
    <text evidence="1">Part of the mechanistic target of rapamycin complex 1 (mTORC1) which contains MTOR, MLST8 and RPTOR. mTORC1 associates with AKT1S1/PRAS40, which inhibits its activity. mTORC1 binds to and is inhibited by FKBP12-rapamycin. Within mTORC1, interacts directly with MTOR and RPTOR. Component of the mechanistic target of rapamycin complex 2 (mTORC2), consisting in two heterotretramers composed of MTOR, MLST8, RICTOR and MAPKAP1/SIN1. Contrary to mTORC1, mTORC2 does not bind to and is not sensitive to FKBP12-rapamycin. mTORC1 and mTORC2 associate with DEPTOR, which regulates their activity. Interacts with RHEB. Interacts with MEAK7. Interacts with SIK3. Interacts with SLC38A7; this interaction promotes the recruitment of mTORC1 to the lysosome and its subsequent activation.</text>
</comment>
<comment type="subcellular location">
    <subcellularLocation>
        <location evidence="1">Lysosome membrane</location>
    </subcellularLocation>
    <subcellularLocation>
        <location evidence="3">Cytoplasm</location>
    </subcellularLocation>
    <text evidence="1">Targeting to lysosomal membrane depends on amino acid availability: mTORC1 is recruited to lysosome membranes via interaction with GTP-bound form of RagA/RRAGA (or RagB/RRAGB) in complex with the GDP-bound form of RagC/RRAGC (or RagD/RRAGD), promoting its mTORC1 recruitment to the lysosomes.</text>
</comment>
<comment type="PTM">
    <text evidence="1">Phosphorylation at Thr-51 by CDK1 promotes ubiquitination by the SCF(FBXW7) complex, followed by degradation.</text>
</comment>
<comment type="PTM">
    <text evidence="1">Ubiquitination by the SCF(FBXW7) and SCF(FBXW11) complexes following phosphorylation at Thr-51 by CDK1, leads to its degradation by the proteasome. Ubiquitination at Lys-305 and Lys-313 by TRAF2 via 'Lys-63'-linked polyubiquitin chains inhibits formation of the mTORC2 complex, while promoting formation of the mTORC1 complex: ubiquitination disrupts the interaction between MLST8 and MAPKAP1/SIN1 to favor mTORC1 assembly. Deubiquitination at Lys-305 and Lys-313 by OTUD7B promotes MLST8 interaction with MAPKAP1/SIN1, facilitating mTORC2 assembly.</text>
</comment>
<comment type="PTM">
    <text evidence="2">Sumoylation with SUMO1, SUMO2 and SUMO3 promotes assembly of both mTORC1 and mTORC2 complexes.</text>
</comment>
<comment type="similarity">
    <text evidence="4">Belongs to the WD repeat LST8 family.</text>
</comment>
<comment type="sequence caution" evidence="4">
    <conflict type="frameshift">
        <sequence resource="EMBL-CDS" id="AAX46409"/>
    </conflict>
</comment>
<keyword id="KW-0007">Acetylation</keyword>
<keyword id="KW-0963">Cytoplasm</keyword>
<keyword id="KW-1017">Isopeptide bond</keyword>
<keyword id="KW-0458">Lysosome</keyword>
<keyword id="KW-0472">Membrane</keyword>
<keyword id="KW-0597">Phosphoprotein</keyword>
<keyword id="KW-1185">Reference proteome</keyword>
<keyword id="KW-0677">Repeat</keyword>
<keyword id="KW-0832">Ubl conjugation</keyword>
<keyword id="KW-0853">WD repeat</keyword>
<gene>
    <name evidence="1" type="primary">MLST8</name>
    <name type="synonym">GBL</name>
    <name type="synonym">LST8</name>
</gene>
<evidence type="ECO:0000250" key="1">
    <source>
        <dbReference type="UniProtKB" id="Q9BVC4"/>
    </source>
</evidence>
<evidence type="ECO:0000250" key="2">
    <source>
        <dbReference type="UniProtKB" id="Q9DCJ1"/>
    </source>
</evidence>
<evidence type="ECO:0000250" key="3">
    <source>
        <dbReference type="UniProtKB" id="Q9Z2K5"/>
    </source>
</evidence>
<evidence type="ECO:0000305" key="4"/>
<reference key="1">
    <citation type="journal article" date="2005" name="BMC Genomics">
        <title>Characterization of 954 bovine full-CDS cDNA sequences.</title>
        <authorList>
            <person name="Harhay G.P."/>
            <person name="Sonstegard T.S."/>
            <person name="Keele J.W."/>
            <person name="Heaton M.P."/>
            <person name="Clawson M.L."/>
            <person name="Snelling W.M."/>
            <person name="Wiedmann R.T."/>
            <person name="Van Tassell C.P."/>
            <person name="Smith T.P.L."/>
        </authorList>
    </citation>
    <scope>NUCLEOTIDE SEQUENCE [LARGE SCALE MRNA]</scope>
</reference>
<reference key="2">
    <citation type="submission" date="2006-06" db="EMBL/GenBank/DDBJ databases">
        <authorList>
            <consortium name="NIH - Mammalian Gene Collection (MGC) project"/>
        </authorList>
    </citation>
    <scope>NUCLEOTIDE SEQUENCE [LARGE SCALE MRNA]</scope>
    <source>
        <strain>Hereford</strain>
        <tissue>Thalamus</tissue>
    </source>
</reference>
<protein>
    <recommendedName>
        <fullName evidence="1">Target of rapamycin complex subunit LST8</fullName>
        <shortName>TORC subunit LST8</shortName>
    </recommendedName>
    <alternativeName>
        <fullName>G protein beta subunit-like</fullName>
        <shortName>Protein GbetaL</shortName>
    </alternativeName>
    <alternativeName>
        <fullName>Mammalian lethal with SEC13 protein 8</fullName>
        <shortName>mLST8</shortName>
    </alternativeName>
</protein>
<name>LST8_BOVIN</name>
<sequence length="326" mass="35920">MNTSPGTVGSDPVILATAGYDHTVRFWQAHSGICTRTVQHQDSQVNALEITPDRTMIAAAGYQHIRMYDLNSNNPNPIISYDGVNKNVASVGFHEDGRWMYTGGEDCTARIWDLRSRNLQCQRIFQVNAPINCVCLHPNQAELIVGDQSGAIHIWDLKTDHNEQLIPEPEVSITSAHIDPDASYMAAVNSTGNCYVWNLTGGIGDEVTQLIPKTKIPAHTRYALQCRFSPDSTLLATCSADQTCKIWRTSNFSLMTELSIKSSNPGESSRGWMWGCAFSGDSQYIVTASSDNLARLWCVETGEIKREYGGHQKAVVCLAFNDSVLG</sequence>
<accession>Q17QU5</accession>
<accession>Q58DN5</accession>
<dbReference type="EMBL" id="BT021562">
    <property type="protein sequence ID" value="AAX46409.1"/>
    <property type="status" value="ALT_FRAME"/>
    <property type="molecule type" value="mRNA"/>
</dbReference>
<dbReference type="EMBL" id="BC118176">
    <property type="protein sequence ID" value="AAI18177.1"/>
    <property type="molecule type" value="mRNA"/>
</dbReference>
<dbReference type="RefSeq" id="NP_001030488.2">
    <property type="nucleotide sequence ID" value="NM_001035411.2"/>
</dbReference>
<dbReference type="RefSeq" id="XP_005224583.1">
    <property type="nucleotide sequence ID" value="XM_005224526.3"/>
</dbReference>
<dbReference type="SMR" id="Q17QU5"/>
<dbReference type="FunCoup" id="Q17QU5">
    <property type="interactions" value="3312"/>
</dbReference>
<dbReference type="STRING" id="9913.ENSBTAP00000013104"/>
<dbReference type="PaxDb" id="9913-ENSBTAP00000013104"/>
<dbReference type="GeneID" id="535236"/>
<dbReference type="KEGG" id="bta:535236"/>
<dbReference type="CTD" id="64223"/>
<dbReference type="VEuPathDB" id="HostDB:ENSBTAG00000009928"/>
<dbReference type="eggNOG" id="KOG0315">
    <property type="taxonomic scope" value="Eukaryota"/>
</dbReference>
<dbReference type="HOGENOM" id="CLU_000288_57_5_1"/>
<dbReference type="InParanoid" id="Q17QU5"/>
<dbReference type="OMA" id="VQRNYKH"/>
<dbReference type="OrthoDB" id="400at2759"/>
<dbReference type="TreeFam" id="TF318577"/>
<dbReference type="Reactome" id="R-BTA-1632852">
    <property type="pathway name" value="Macroautophagy"/>
</dbReference>
<dbReference type="Reactome" id="R-BTA-165159">
    <property type="pathway name" value="MTOR signalling"/>
</dbReference>
<dbReference type="Reactome" id="R-BTA-166208">
    <property type="pathway name" value="mTORC1-mediated signalling"/>
</dbReference>
<dbReference type="Reactome" id="R-BTA-3371571">
    <property type="pathway name" value="HSF1-dependent transactivation"/>
</dbReference>
<dbReference type="Reactome" id="R-BTA-380972">
    <property type="pathway name" value="Energy dependent regulation of mTOR by LKB1-AMPK"/>
</dbReference>
<dbReference type="Reactome" id="R-BTA-5628897">
    <property type="pathway name" value="TP53 Regulates Metabolic Genes"/>
</dbReference>
<dbReference type="Reactome" id="R-BTA-8943724">
    <property type="pathway name" value="Regulation of PTEN gene transcription"/>
</dbReference>
<dbReference type="Reactome" id="R-BTA-9639288">
    <property type="pathway name" value="Amino acids regulate mTORC1"/>
</dbReference>
<dbReference type="Proteomes" id="UP000009136">
    <property type="component" value="Chromosome 25"/>
</dbReference>
<dbReference type="Bgee" id="ENSBTAG00000009928">
    <property type="expression patterns" value="Expressed in retina and 107 other cell types or tissues"/>
</dbReference>
<dbReference type="GO" id="GO:0005737">
    <property type="term" value="C:cytoplasm"/>
    <property type="evidence" value="ECO:0000250"/>
    <property type="project" value="UniProtKB"/>
</dbReference>
<dbReference type="GO" id="GO:0005765">
    <property type="term" value="C:lysosomal membrane"/>
    <property type="evidence" value="ECO:0007669"/>
    <property type="project" value="UniProtKB-SubCell"/>
</dbReference>
<dbReference type="GO" id="GO:0031931">
    <property type="term" value="C:TORC1 complex"/>
    <property type="evidence" value="ECO:0000318"/>
    <property type="project" value="GO_Central"/>
</dbReference>
<dbReference type="GO" id="GO:0031932">
    <property type="term" value="C:TORC2 complex"/>
    <property type="evidence" value="ECO:0000250"/>
    <property type="project" value="UniProtKB"/>
</dbReference>
<dbReference type="GO" id="GO:0032956">
    <property type="term" value="P:regulation of actin cytoskeleton organization"/>
    <property type="evidence" value="ECO:0000318"/>
    <property type="project" value="GO_Central"/>
</dbReference>
<dbReference type="GO" id="GO:0031929">
    <property type="term" value="P:TOR signaling"/>
    <property type="evidence" value="ECO:0000318"/>
    <property type="project" value="GO_Central"/>
</dbReference>
<dbReference type="GO" id="GO:0038203">
    <property type="term" value="P:TORC2 signaling"/>
    <property type="evidence" value="ECO:0000250"/>
    <property type="project" value="UniProtKB"/>
</dbReference>
<dbReference type="CDD" id="cd00200">
    <property type="entry name" value="WD40"/>
    <property type="match status" value="1"/>
</dbReference>
<dbReference type="FunFam" id="2.130.10.10:FF:000086">
    <property type="entry name" value="target of rapamycin complex subunit LST8"/>
    <property type="match status" value="1"/>
</dbReference>
<dbReference type="Gene3D" id="2.130.10.10">
    <property type="entry name" value="YVTN repeat-like/Quinoprotein amine dehydrogenase"/>
    <property type="match status" value="1"/>
</dbReference>
<dbReference type="InterPro" id="IPR020472">
    <property type="entry name" value="G-protein_beta_WD-40_rep"/>
</dbReference>
<dbReference type="InterPro" id="IPR037588">
    <property type="entry name" value="MLST8"/>
</dbReference>
<dbReference type="InterPro" id="IPR011047">
    <property type="entry name" value="Quinoprotein_ADH-like_sf"/>
</dbReference>
<dbReference type="InterPro" id="IPR015943">
    <property type="entry name" value="WD40/YVTN_repeat-like_dom_sf"/>
</dbReference>
<dbReference type="InterPro" id="IPR019775">
    <property type="entry name" value="WD40_repeat_CS"/>
</dbReference>
<dbReference type="InterPro" id="IPR001680">
    <property type="entry name" value="WD40_rpt"/>
</dbReference>
<dbReference type="PANTHER" id="PTHR19842">
    <property type="entry name" value="G BETA-LIKE PROTEIN GBL"/>
    <property type="match status" value="1"/>
</dbReference>
<dbReference type="PANTHER" id="PTHR19842:SF0">
    <property type="entry name" value="TARGET OF RAPAMYCIN COMPLEX SUBUNIT LST8"/>
    <property type="match status" value="1"/>
</dbReference>
<dbReference type="Pfam" id="PF00400">
    <property type="entry name" value="WD40"/>
    <property type="match status" value="5"/>
</dbReference>
<dbReference type="PRINTS" id="PR00320">
    <property type="entry name" value="GPROTEINBRPT"/>
</dbReference>
<dbReference type="SMART" id="SM00320">
    <property type="entry name" value="WD40"/>
    <property type="match status" value="6"/>
</dbReference>
<dbReference type="SUPFAM" id="SSF50998">
    <property type="entry name" value="Quinoprotein alcohol dehydrogenase-like"/>
    <property type="match status" value="1"/>
</dbReference>
<dbReference type="PROSITE" id="PS00678">
    <property type="entry name" value="WD_REPEATS_1"/>
    <property type="match status" value="1"/>
</dbReference>
<dbReference type="PROSITE" id="PS50082">
    <property type="entry name" value="WD_REPEATS_2"/>
    <property type="match status" value="3"/>
</dbReference>
<dbReference type="PROSITE" id="PS50294">
    <property type="entry name" value="WD_REPEATS_REGION"/>
    <property type="match status" value="1"/>
</dbReference>
<organism>
    <name type="scientific">Bos taurus</name>
    <name type="common">Bovine</name>
    <dbReference type="NCBI Taxonomy" id="9913"/>
    <lineage>
        <taxon>Eukaryota</taxon>
        <taxon>Metazoa</taxon>
        <taxon>Chordata</taxon>
        <taxon>Craniata</taxon>
        <taxon>Vertebrata</taxon>
        <taxon>Euteleostomi</taxon>
        <taxon>Mammalia</taxon>
        <taxon>Eutheria</taxon>
        <taxon>Laurasiatheria</taxon>
        <taxon>Artiodactyla</taxon>
        <taxon>Ruminantia</taxon>
        <taxon>Pecora</taxon>
        <taxon>Bovidae</taxon>
        <taxon>Bovinae</taxon>
        <taxon>Bos</taxon>
    </lineage>
</organism>